<name>TP6_AQUCT</name>
<proteinExistence type="evidence at protein level"/>
<organism>
    <name type="scientific">Aquarana catesbeiana</name>
    <name type="common">American bullfrog</name>
    <name type="synonym">Rana catesbeiana</name>
    <dbReference type="NCBI Taxonomy" id="8400"/>
    <lineage>
        <taxon>Eukaryota</taxon>
        <taxon>Metazoa</taxon>
        <taxon>Chordata</taxon>
        <taxon>Craniata</taxon>
        <taxon>Vertebrata</taxon>
        <taxon>Euteleostomi</taxon>
        <taxon>Amphibia</taxon>
        <taxon>Batrachia</taxon>
        <taxon>Anura</taxon>
        <taxon>Neobatrachia</taxon>
        <taxon>Ranoidea</taxon>
        <taxon>Ranidae</taxon>
        <taxon>Aquarana</taxon>
    </lineage>
</organism>
<dbReference type="GO" id="GO:0005576">
    <property type="term" value="C:extracellular region"/>
    <property type="evidence" value="ECO:0007669"/>
    <property type="project" value="UniProtKB-SubCell"/>
</dbReference>
<dbReference type="GO" id="GO:0042742">
    <property type="term" value="P:defense response to bacterium"/>
    <property type="evidence" value="ECO:0007669"/>
    <property type="project" value="UniProtKB-KW"/>
</dbReference>
<accession>P82821</accession>
<feature type="peptide" id="PRO_0000043563" description="Ranatuerin-6" evidence="1">
    <location>
        <begin position="1"/>
        <end position="13"/>
    </location>
</feature>
<comment type="function">
    <text evidence="1">Antibacterial activity against Gram-positive bacterium S.aureus (MIC=100 uM). Shows no detectable hemolytic activity towards human erythrocytes.</text>
</comment>
<comment type="subcellular location">
    <subcellularLocation>
        <location evidence="1">Secreted</location>
    </subcellularLocation>
</comment>
<comment type="tissue specificity">
    <text evidence="4">Expressed by the skin glands.</text>
</comment>
<comment type="similarity">
    <text evidence="3">Belongs to the frog skin active peptide (FSAP) family. Temporin subfamily.</text>
</comment>
<keyword id="KW-0878">Amphibian defense peptide</keyword>
<keyword id="KW-0044">Antibiotic</keyword>
<keyword id="KW-0929">Antimicrobial</keyword>
<keyword id="KW-0903">Direct protein sequencing</keyword>
<keyword id="KW-0964">Secreted</keyword>
<protein>
    <recommendedName>
        <fullName evidence="2">Ranatuerin-6</fullName>
    </recommendedName>
    <alternativeName>
        <fullName evidence="3">Temporin</fullName>
    </alternativeName>
</protein>
<evidence type="ECO:0000269" key="1">
    <source>
    </source>
</evidence>
<evidence type="ECO:0000303" key="2">
    <source>
    </source>
</evidence>
<evidence type="ECO:0000305" key="3"/>
<evidence type="ECO:0000305" key="4">
    <source>
    </source>
</evidence>
<sequence length="13" mass="1398">FISAIASMLGKFL</sequence>
<reference key="1">
    <citation type="journal article" date="1998" name="Biochem. Biophys. Res. Commun.">
        <title>Ranatuerins: antimicrobial peptides isolated from the skin of the American bullfrog, Rana catesbeiana.</title>
        <authorList>
            <person name="Goraya J."/>
            <person name="Knoop F.C."/>
            <person name="Conlon J.M."/>
        </authorList>
    </citation>
    <scope>PROTEIN SEQUENCE</scope>
    <scope>FUNCTION</scope>
    <scope>SUBCELLULAR LOCATION</scope>
    <source>
        <tissue>Skin secretion</tissue>
    </source>
</reference>